<evidence type="ECO:0000255" key="1">
    <source>
        <dbReference type="HAMAP-Rule" id="MF_00583"/>
    </source>
</evidence>
<keyword id="KW-0067">ATP-binding</keyword>
<keyword id="KW-0963">Cytoplasm</keyword>
<keyword id="KW-0418">Kinase</keyword>
<keyword id="KW-0460">Magnesium</keyword>
<keyword id="KW-0479">Metal-binding</keyword>
<keyword id="KW-0545">Nucleotide biosynthesis</keyword>
<keyword id="KW-0547">Nucleotide-binding</keyword>
<keyword id="KW-0808">Transferase</keyword>
<reference key="1">
    <citation type="journal article" date="2002" name="Mol. Microbiol.">
        <title>Genome sequence of Streptococcus agalactiae, a pathogen causing invasive neonatal disease.</title>
        <authorList>
            <person name="Glaser P."/>
            <person name="Rusniok C."/>
            <person name="Buchrieser C."/>
            <person name="Chevalier F."/>
            <person name="Frangeul L."/>
            <person name="Msadek T."/>
            <person name="Zouine M."/>
            <person name="Couve E."/>
            <person name="Lalioui L."/>
            <person name="Poyart C."/>
            <person name="Trieu-Cuot P."/>
            <person name="Kunst F."/>
        </authorList>
    </citation>
    <scope>NUCLEOTIDE SEQUENCE [LARGE SCALE GENOMIC DNA]</scope>
    <source>
        <strain>NEM316</strain>
    </source>
</reference>
<organism>
    <name type="scientific">Streptococcus agalactiae serotype III (strain NEM316)</name>
    <dbReference type="NCBI Taxonomy" id="211110"/>
    <lineage>
        <taxon>Bacteria</taxon>
        <taxon>Bacillati</taxon>
        <taxon>Bacillota</taxon>
        <taxon>Bacilli</taxon>
        <taxon>Lactobacillales</taxon>
        <taxon>Streptococcaceae</taxon>
        <taxon>Streptococcus</taxon>
    </lineage>
</organism>
<proteinExistence type="inferred from homology"/>
<protein>
    <recommendedName>
        <fullName evidence="1">Ribose-phosphate pyrophosphokinase 1</fullName>
        <shortName evidence="1">RPPK 1</shortName>
        <ecNumber evidence="1">2.7.6.1</ecNumber>
    </recommendedName>
    <alternativeName>
        <fullName evidence="1">5-phospho-D-ribosyl alpha-1-diphosphate synthase 1</fullName>
    </alternativeName>
    <alternativeName>
        <fullName evidence="1">Phosphoribosyl diphosphate synthase 1</fullName>
    </alternativeName>
    <alternativeName>
        <fullName evidence="1">Phosphoribosyl pyrophosphate synthase 1</fullName>
        <shortName evidence="1">P-Rib-PP synthase 1</shortName>
        <shortName evidence="1">PRPP synthase 1</shortName>
        <shortName evidence="1">PRPPase 1</shortName>
    </alternativeName>
</protein>
<feature type="chain" id="PRO_0000141196" description="Ribose-phosphate pyrophosphokinase 1">
    <location>
        <begin position="1"/>
        <end position="322"/>
    </location>
</feature>
<feature type="active site" evidence="1">
    <location>
        <position position="196"/>
    </location>
</feature>
<feature type="binding site" evidence="1">
    <location>
        <begin position="39"/>
        <end position="41"/>
    </location>
    <ligand>
        <name>ATP</name>
        <dbReference type="ChEBI" id="CHEBI:30616"/>
    </ligand>
</feature>
<feature type="binding site" evidence="1">
    <location>
        <begin position="98"/>
        <end position="99"/>
    </location>
    <ligand>
        <name>ATP</name>
        <dbReference type="ChEBI" id="CHEBI:30616"/>
    </ligand>
</feature>
<feature type="binding site" evidence="1">
    <location>
        <position position="132"/>
    </location>
    <ligand>
        <name>Mg(2+)</name>
        <dbReference type="ChEBI" id="CHEBI:18420"/>
        <label>1</label>
    </ligand>
</feature>
<feature type="binding site" evidence="1">
    <location>
        <position position="173"/>
    </location>
    <ligand>
        <name>Mg(2+)</name>
        <dbReference type="ChEBI" id="CHEBI:18420"/>
        <label>2</label>
    </ligand>
</feature>
<feature type="binding site" evidence="1">
    <location>
        <position position="198"/>
    </location>
    <ligand>
        <name>D-ribose 5-phosphate</name>
        <dbReference type="ChEBI" id="CHEBI:78346"/>
    </ligand>
</feature>
<feature type="binding site" evidence="1">
    <location>
        <position position="224"/>
    </location>
    <ligand>
        <name>D-ribose 5-phosphate</name>
        <dbReference type="ChEBI" id="CHEBI:78346"/>
    </ligand>
</feature>
<feature type="binding site" evidence="1">
    <location>
        <begin position="228"/>
        <end position="232"/>
    </location>
    <ligand>
        <name>D-ribose 5-phosphate</name>
        <dbReference type="ChEBI" id="CHEBI:78346"/>
    </ligand>
</feature>
<gene>
    <name evidence="1" type="primary">prs1</name>
    <name type="ordered locus">gbs0017</name>
</gene>
<dbReference type="EC" id="2.7.6.1" evidence="1"/>
<dbReference type="EMBL" id="AL766843">
    <property type="protein sequence ID" value="CAD45662.1"/>
    <property type="molecule type" value="Genomic_DNA"/>
</dbReference>
<dbReference type="RefSeq" id="WP_000122450.1">
    <property type="nucleotide sequence ID" value="NC_004368.1"/>
</dbReference>
<dbReference type="SMR" id="Q8E7X8"/>
<dbReference type="KEGG" id="san:gbs0017"/>
<dbReference type="eggNOG" id="COG0462">
    <property type="taxonomic scope" value="Bacteria"/>
</dbReference>
<dbReference type="HOGENOM" id="CLU_033546_4_0_9"/>
<dbReference type="UniPathway" id="UPA00087">
    <property type="reaction ID" value="UER00172"/>
</dbReference>
<dbReference type="Proteomes" id="UP000000823">
    <property type="component" value="Chromosome"/>
</dbReference>
<dbReference type="GO" id="GO:0005737">
    <property type="term" value="C:cytoplasm"/>
    <property type="evidence" value="ECO:0007669"/>
    <property type="project" value="UniProtKB-SubCell"/>
</dbReference>
<dbReference type="GO" id="GO:0002189">
    <property type="term" value="C:ribose phosphate diphosphokinase complex"/>
    <property type="evidence" value="ECO:0007669"/>
    <property type="project" value="TreeGrafter"/>
</dbReference>
<dbReference type="GO" id="GO:0005524">
    <property type="term" value="F:ATP binding"/>
    <property type="evidence" value="ECO:0007669"/>
    <property type="project" value="UniProtKB-KW"/>
</dbReference>
<dbReference type="GO" id="GO:0016301">
    <property type="term" value="F:kinase activity"/>
    <property type="evidence" value="ECO:0007669"/>
    <property type="project" value="UniProtKB-KW"/>
</dbReference>
<dbReference type="GO" id="GO:0000287">
    <property type="term" value="F:magnesium ion binding"/>
    <property type="evidence" value="ECO:0007669"/>
    <property type="project" value="UniProtKB-UniRule"/>
</dbReference>
<dbReference type="GO" id="GO:0004749">
    <property type="term" value="F:ribose phosphate diphosphokinase activity"/>
    <property type="evidence" value="ECO:0007669"/>
    <property type="project" value="UniProtKB-UniRule"/>
</dbReference>
<dbReference type="GO" id="GO:0006015">
    <property type="term" value="P:5-phosphoribose 1-diphosphate biosynthetic process"/>
    <property type="evidence" value="ECO:0007669"/>
    <property type="project" value="UniProtKB-UniRule"/>
</dbReference>
<dbReference type="GO" id="GO:0006164">
    <property type="term" value="P:purine nucleotide biosynthetic process"/>
    <property type="evidence" value="ECO:0007669"/>
    <property type="project" value="TreeGrafter"/>
</dbReference>
<dbReference type="GO" id="GO:0009156">
    <property type="term" value="P:ribonucleoside monophosphate biosynthetic process"/>
    <property type="evidence" value="ECO:0007669"/>
    <property type="project" value="InterPro"/>
</dbReference>
<dbReference type="CDD" id="cd06223">
    <property type="entry name" value="PRTases_typeI"/>
    <property type="match status" value="1"/>
</dbReference>
<dbReference type="FunFam" id="3.40.50.2020:FF:000001">
    <property type="entry name" value="Ribose-phosphate pyrophosphokinase"/>
    <property type="match status" value="1"/>
</dbReference>
<dbReference type="Gene3D" id="3.40.50.2020">
    <property type="match status" value="2"/>
</dbReference>
<dbReference type="HAMAP" id="MF_00583_B">
    <property type="entry name" value="RibP_PPkinase_B"/>
    <property type="match status" value="1"/>
</dbReference>
<dbReference type="InterPro" id="IPR000842">
    <property type="entry name" value="PRib_PP_synth_CS"/>
</dbReference>
<dbReference type="InterPro" id="IPR029099">
    <property type="entry name" value="Pribosyltran_N"/>
</dbReference>
<dbReference type="InterPro" id="IPR000836">
    <property type="entry name" value="PRibTrfase_dom"/>
</dbReference>
<dbReference type="InterPro" id="IPR029057">
    <property type="entry name" value="PRTase-like"/>
</dbReference>
<dbReference type="InterPro" id="IPR005946">
    <property type="entry name" value="Rib-P_diPkinase"/>
</dbReference>
<dbReference type="InterPro" id="IPR037515">
    <property type="entry name" value="Rib-P_diPkinase_bac"/>
</dbReference>
<dbReference type="NCBIfam" id="NF002320">
    <property type="entry name" value="PRK01259.1"/>
    <property type="match status" value="1"/>
</dbReference>
<dbReference type="NCBIfam" id="NF002618">
    <property type="entry name" value="PRK02269.1"/>
    <property type="match status" value="1"/>
</dbReference>
<dbReference type="NCBIfam" id="TIGR01251">
    <property type="entry name" value="ribP_PPkin"/>
    <property type="match status" value="1"/>
</dbReference>
<dbReference type="PANTHER" id="PTHR10210">
    <property type="entry name" value="RIBOSE-PHOSPHATE DIPHOSPHOKINASE FAMILY MEMBER"/>
    <property type="match status" value="1"/>
</dbReference>
<dbReference type="PANTHER" id="PTHR10210:SF41">
    <property type="entry name" value="RIBOSE-PHOSPHATE PYROPHOSPHOKINASE 1, CHLOROPLASTIC"/>
    <property type="match status" value="1"/>
</dbReference>
<dbReference type="Pfam" id="PF14572">
    <property type="entry name" value="Pribosyl_synth"/>
    <property type="match status" value="1"/>
</dbReference>
<dbReference type="Pfam" id="PF13793">
    <property type="entry name" value="Pribosyltran_N"/>
    <property type="match status" value="1"/>
</dbReference>
<dbReference type="SMART" id="SM01400">
    <property type="entry name" value="Pribosyltran_N"/>
    <property type="match status" value="1"/>
</dbReference>
<dbReference type="SUPFAM" id="SSF53271">
    <property type="entry name" value="PRTase-like"/>
    <property type="match status" value="1"/>
</dbReference>
<dbReference type="PROSITE" id="PS00114">
    <property type="entry name" value="PRPP_SYNTHASE"/>
    <property type="match status" value="1"/>
</dbReference>
<comment type="function">
    <text evidence="1">Involved in the biosynthesis of the central metabolite phospho-alpha-D-ribosyl-1-pyrophosphate (PRPP) via the transfer of pyrophosphoryl group from ATP to 1-hydroxyl of ribose-5-phosphate (Rib-5-P).</text>
</comment>
<comment type="catalytic activity">
    <reaction evidence="1">
        <text>D-ribose 5-phosphate + ATP = 5-phospho-alpha-D-ribose 1-diphosphate + AMP + H(+)</text>
        <dbReference type="Rhea" id="RHEA:15609"/>
        <dbReference type="ChEBI" id="CHEBI:15378"/>
        <dbReference type="ChEBI" id="CHEBI:30616"/>
        <dbReference type="ChEBI" id="CHEBI:58017"/>
        <dbReference type="ChEBI" id="CHEBI:78346"/>
        <dbReference type="ChEBI" id="CHEBI:456215"/>
        <dbReference type="EC" id="2.7.6.1"/>
    </reaction>
</comment>
<comment type="cofactor">
    <cofactor evidence="1">
        <name>Mg(2+)</name>
        <dbReference type="ChEBI" id="CHEBI:18420"/>
    </cofactor>
    <text evidence="1">Binds 2 Mg(2+) ions per subunit.</text>
</comment>
<comment type="pathway">
    <text evidence="1">Metabolic intermediate biosynthesis; 5-phospho-alpha-D-ribose 1-diphosphate biosynthesis; 5-phospho-alpha-D-ribose 1-diphosphate from D-ribose 5-phosphate (route I): step 1/1.</text>
</comment>
<comment type="subunit">
    <text evidence="1">Homohexamer.</text>
</comment>
<comment type="subcellular location">
    <subcellularLocation>
        <location evidence="1">Cytoplasm</location>
    </subcellularLocation>
</comment>
<comment type="similarity">
    <text evidence="1">Belongs to the ribose-phosphate pyrophosphokinase family. Class I subfamily.</text>
</comment>
<sequence length="322" mass="35284">MSYSNLKLFALSSNKELAKKVSQTIGIPLGQSTVRQFSDGEIQVNIEESIRGHHVFILQSTSSPVNDNLMEILIMVDALKRASAESVSVVMPYYGYARQDRKARSREPITSKLVANMLEVAGVDRLLTVDLHAAQIQGFFDIPVDHLMGAPLIADYFDRQGLVGDDVVVVSPDHGGVTRARKLAQCLKTPIAIIDKRRSVTKMNTSEVMNIIGNIKGKKCILIDDMIDTAGTICHAADALAEAGATAVYASCTHPVLSGPALDNIQNSAIEKLIVLDTIYLPEERLIDKIEQISIAELIGEAIIRIHEKRPLSPLFEMNKLK</sequence>
<accession>Q8E7X8</accession>
<name>KPRS1_STRA3</name>